<accession>P78061</accession>
<accession>P78287</accession>
<feature type="chain" id="PRO_0000153280" description="Gamma-glutamylputrescine synthetase PuuA">
    <location>
        <begin position="1"/>
        <end position="472"/>
    </location>
</feature>
<feature type="domain" description="GS beta-grasp" evidence="1">
    <location>
        <begin position="35"/>
        <end position="129"/>
    </location>
</feature>
<feature type="domain" description="GS catalytic" evidence="2">
    <location>
        <begin position="136"/>
        <end position="472"/>
    </location>
</feature>
<feature type="mutagenesis site" description="Activity is impaired to 9% of wild-type." evidence="5">
    <original>H</original>
    <variation>N</variation>
    <location>
        <position position="282"/>
    </location>
</feature>
<feature type="mutagenesis site" description="Activity is impaired to 3% of wild-type." evidence="5">
    <original>R</original>
    <variation>Q</variation>
    <location>
        <position position="357"/>
    </location>
</feature>
<comment type="function">
    <text evidence="4 5">Involved in the breakdown of putrescine. Catalyzes the ATP-dependent gamma-glutamylation of putrescine, producing gamma-L-glutamylputrescine. Absolutely essential to utilize putrescine as both nitrogen and carbon sources and to decrease the toxicity of putrescine, which can lead to inhibition of cell growth and protein synthesis. In vitro is also able to use several diamines, and spermidine and spermine, instead of putrescine, but with a much lower activity, and cannot catalyze the gamma-glutamylation of ornithine or GABA (PubMed:18495664).</text>
</comment>
<comment type="catalytic activity">
    <reaction evidence="5">
        <text>putrescine + L-glutamate + ATP = gamma-L-glutamylputrescine + ADP + phosphate + H(+)</text>
        <dbReference type="Rhea" id="RHEA:13633"/>
        <dbReference type="ChEBI" id="CHEBI:15378"/>
        <dbReference type="ChEBI" id="CHEBI:29985"/>
        <dbReference type="ChEBI" id="CHEBI:30616"/>
        <dbReference type="ChEBI" id="CHEBI:43474"/>
        <dbReference type="ChEBI" id="CHEBI:58731"/>
        <dbReference type="ChEBI" id="CHEBI:326268"/>
        <dbReference type="ChEBI" id="CHEBI:456216"/>
        <dbReference type="EC" id="6.3.1.11"/>
    </reaction>
    <physiologicalReaction direction="left-to-right" evidence="5">
        <dbReference type="Rhea" id="RHEA:13634"/>
    </physiologicalReaction>
</comment>
<comment type="cofactor">
    <cofactor evidence="5">
        <name>Mg(2+)</name>
        <dbReference type="ChEBI" id="CHEBI:18420"/>
    </cofactor>
    <cofactor evidence="5">
        <name>Mn(2+)</name>
        <dbReference type="ChEBI" id="CHEBI:29035"/>
    </cofactor>
    <text evidence="5">Requires Mg(2+), that can be substituted by Mn(2+).</text>
</comment>
<comment type="biophysicochemical properties">
    <kinetics>
        <KM evidence="5">2.07 mM for glutamate (at pH 8 and at 37 degrees Celsius)</KM>
        <KM evidence="5">2.25 mM for ATP (at pH 8 and at 37 degrees Celsius)</KM>
        <KM evidence="5">44.6 mM for putrescine (at pH 8 and at 37 degrees Celsius)</KM>
        <Vmax evidence="5">6.71 umol/min/mg enzyme with putrescine as substrate (at pH 8 and at 37 degrees Celsius)</Vmax>
    </kinetics>
    <phDependence>
        <text evidence="5">Optimum pH is 9.</text>
    </phDependence>
</comment>
<comment type="pathway">
    <text evidence="5">Amine and polyamine degradation; putrescine degradation; 4-aminobutanoate from putrescine: step 1/4.</text>
</comment>
<comment type="subunit">
    <text evidence="5">Dodecamer.</text>
</comment>
<comment type="induction">
    <text evidence="3 5">Induced by putrescine and repressed by PuuR. Transiently induced by cold shock.</text>
</comment>
<comment type="disruption phenotype">
    <text evidence="5">Cells lacking this gene cannot grow on putrescine as the sole source of carbon or nitrogen.</text>
</comment>
<comment type="similarity">
    <text evidence="7">Belongs to the glutamine synthetase family.</text>
</comment>
<reference key="1">
    <citation type="journal article" date="1996" name="DNA Res.">
        <title>A 570-kb DNA sequence of the Escherichia coli K-12 genome corresponding to the 28.0-40.1 min region on the linkage map.</title>
        <authorList>
            <person name="Aiba H."/>
            <person name="Baba T."/>
            <person name="Fujita K."/>
            <person name="Hayashi K."/>
            <person name="Inada T."/>
            <person name="Isono K."/>
            <person name="Itoh T."/>
            <person name="Kasai H."/>
            <person name="Kashimoto K."/>
            <person name="Kimura S."/>
            <person name="Kitakawa M."/>
            <person name="Kitagawa M."/>
            <person name="Makino K."/>
            <person name="Miki T."/>
            <person name="Mizobuchi K."/>
            <person name="Mori H."/>
            <person name="Mori T."/>
            <person name="Motomura K."/>
            <person name="Nakade S."/>
            <person name="Nakamura Y."/>
            <person name="Nashimoto H."/>
            <person name="Nishio Y."/>
            <person name="Oshima T."/>
            <person name="Saito N."/>
            <person name="Sampei G."/>
            <person name="Seki Y."/>
            <person name="Sivasundaram S."/>
            <person name="Tagami H."/>
            <person name="Takeda J."/>
            <person name="Takemoto K."/>
            <person name="Takeuchi Y."/>
            <person name="Wada C."/>
            <person name="Yamamoto Y."/>
            <person name="Horiuchi T."/>
        </authorList>
    </citation>
    <scope>NUCLEOTIDE SEQUENCE [LARGE SCALE GENOMIC DNA]</scope>
    <source>
        <strain>K12 / W3110 / ATCC 27325 / DSM 5911</strain>
    </source>
</reference>
<reference key="2">
    <citation type="journal article" date="1997" name="Science">
        <title>The complete genome sequence of Escherichia coli K-12.</title>
        <authorList>
            <person name="Blattner F.R."/>
            <person name="Plunkett G. III"/>
            <person name="Bloch C.A."/>
            <person name="Perna N.T."/>
            <person name="Burland V."/>
            <person name="Riley M."/>
            <person name="Collado-Vides J."/>
            <person name="Glasner J.D."/>
            <person name="Rode C.K."/>
            <person name="Mayhew G.F."/>
            <person name="Gregor J."/>
            <person name="Davis N.W."/>
            <person name="Kirkpatrick H.A."/>
            <person name="Goeden M.A."/>
            <person name="Rose D.J."/>
            <person name="Mau B."/>
            <person name="Shao Y."/>
        </authorList>
    </citation>
    <scope>NUCLEOTIDE SEQUENCE [LARGE SCALE GENOMIC DNA]</scope>
    <source>
        <strain>K12 / MG1655 / ATCC 47076</strain>
    </source>
</reference>
<reference key="3">
    <citation type="journal article" date="2006" name="Mol. Syst. Biol.">
        <title>Highly accurate genome sequences of Escherichia coli K-12 strains MG1655 and W3110.</title>
        <authorList>
            <person name="Hayashi K."/>
            <person name="Morooka N."/>
            <person name="Yamamoto Y."/>
            <person name="Fujita K."/>
            <person name="Isono K."/>
            <person name="Choi S."/>
            <person name="Ohtsubo E."/>
            <person name="Baba T."/>
            <person name="Wanner B.L."/>
            <person name="Mori H."/>
            <person name="Horiuchi T."/>
        </authorList>
    </citation>
    <scope>NUCLEOTIDE SEQUENCE [LARGE SCALE GENOMIC DNA]</scope>
    <scope>SEQUENCE REVISION</scope>
    <source>
        <strain>K12 / W3110 / ATCC 27325 / DSM 5911</strain>
    </source>
</reference>
<reference key="4">
    <citation type="journal article" date="2003" name="Res. Microbiol.">
        <title>Changes in Escherichia coli transcriptome during acclimatization at low temperature.</title>
        <authorList>
            <person name="Polissi A."/>
            <person name="De Laurentis W."/>
            <person name="Zangrossi S."/>
            <person name="Briani F."/>
            <person name="Longhi V."/>
            <person name="Pesole G."/>
            <person name="Deho G."/>
        </authorList>
    </citation>
    <scope>INDUCTION BY COLD SHOCK</scope>
    <source>
        <strain>K12 / MG1655 / ATCC 47076</strain>
    </source>
</reference>
<reference key="5">
    <citation type="journal article" date="2005" name="J. Biol. Chem.">
        <title>A novel putrescine utilization pathway involves gamma-glutamylated intermediates of Escherichia coli K-12.</title>
        <authorList>
            <person name="Kurihara S."/>
            <person name="Oda S."/>
            <person name="Kato K."/>
            <person name="Kim H.G."/>
            <person name="Koyanagi T."/>
            <person name="Kumagai H."/>
            <person name="Suzuki H."/>
        </authorList>
    </citation>
    <scope>FUNCTION AS A GAMMA-GLUTAMYLPUTRESCINE SYNTHETASE</scope>
    <scope>NOMENCLATURE</scope>
    <source>
        <strain>K12</strain>
    </source>
</reference>
<reference key="6">
    <citation type="journal article" date="2008" name="J. Biol. Chem.">
        <title>gamma-Glutamylputrescine synthetase in the putrescine utilization pathway of Escherichia coli K-12.</title>
        <authorList>
            <person name="Kurihara S."/>
            <person name="Oda S."/>
            <person name="Tsuboi Y."/>
            <person name="Kim H.G."/>
            <person name="Oshida M."/>
            <person name="Kumagai H."/>
            <person name="Suzuki H."/>
        </authorList>
    </citation>
    <scope>FUNCTION IN PUTRESCINE DEGRADATION</scope>
    <scope>CATALYTIC ACTIVITY</scope>
    <scope>COFACTOR</scope>
    <scope>MUTAGENESIS OF HIS-282 AND ARG-357</scope>
    <scope>BIOPHYSICOCHEMICAL PROPERTIES</scope>
    <scope>SUBSTRATE SPECIFICITY</scope>
    <scope>INDUCTION</scope>
    <scope>SUBUNIT</scope>
    <scope>PATHWAY</scope>
    <scope>DISRUPTION PHENOTYPE</scope>
    <source>
        <strain>K12</strain>
    </source>
</reference>
<name>PUUA_ECOLI</name>
<proteinExistence type="evidence at protein level"/>
<sequence>METNIVEVENFVQQSEERRGSAFTQEVKRYLERYPNTQYVDVLLTDLNGCFRGKRIPVSSLKKLEKGCYFPASVFAMDILGNVVEEAGLGQEMGEPDRTCVPVLGSLTPSAADPEFIGQMLLTMVDEDGAPFDVEPRNVLNRLWQQLRQRGLFPVVAVELEFYLLDRQRDAEGYLQPPCAPGTDDRNTQSQVYSVDNLNHFADVLNDIDELAQLQLIPADGAVAEASPGQFEINLYHTDNVLEACDDALALKRLVRLMAEKHKMHATFMAKPYEEHAGSGMHIHISMQNNRGENVLSDAEGEDSPLLKKMLAGMIDLMPSSMALLAPNVNSYRRFQPGMYVPTQASWGHNNRTVALRIPCGDRHNHRVEYRVAGADANPYLVMAAIFAGILHGLDNELPLQEEVEGNGLEQEGLPFPIRQSDALGEFIENDHLRRYLGERFCHVYHACKNDELLQFERLITETEIEWMLKNA</sequence>
<evidence type="ECO:0000255" key="1">
    <source>
        <dbReference type="PROSITE-ProRule" id="PRU01330"/>
    </source>
</evidence>
<evidence type="ECO:0000255" key="2">
    <source>
        <dbReference type="PROSITE-ProRule" id="PRU01331"/>
    </source>
</evidence>
<evidence type="ECO:0000269" key="3">
    <source>
    </source>
</evidence>
<evidence type="ECO:0000269" key="4">
    <source>
    </source>
</evidence>
<evidence type="ECO:0000269" key="5">
    <source>
    </source>
</evidence>
<evidence type="ECO:0000303" key="6">
    <source>
    </source>
</evidence>
<evidence type="ECO:0000305" key="7"/>
<gene>
    <name evidence="6" type="primary">puuA</name>
    <name type="synonym">ycjK</name>
    <name type="ordered locus">b1297</name>
    <name type="ordered locus">JW5201</name>
</gene>
<protein>
    <recommendedName>
        <fullName evidence="6">Gamma-glutamylputrescine synthetase PuuA</fullName>
        <shortName>Gamma-Glu-Put synthetase</shortName>
        <ecNumber evidence="5">6.3.1.11</ecNumber>
    </recommendedName>
    <alternativeName>
        <fullName evidence="6">Glutamate--putrescine ligase</fullName>
    </alternativeName>
</protein>
<dbReference type="EC" id="6.3.1.11" evidence="5"/>
<dbReference type="EMBL" id="U00096">
    <property type="protein sequence ID" value="AAC74379.2"/>
    <property type="molecule type" value="Genomic_DNA"/>
</dbReference>
<dbReference type="EMBL" id="AP009048">
    <property type="protein sequence ID" value="BAA14857.2"/>
    <property type="molecule type" value="Genomic_DNA"/>
</dbReference>
<dbReference type="PIR" id="D64878">
    <property type="entry name" value="D64878"/>
</dbReference>
<dbReference type="RefSeq" id="NP_415813.4">
    <property type="nucleotide sequence ID" value="NC_000913.3"/>
</dbReference>
<dbReference type="RefSeq" id="WP_001296746.1">
    <property type="nucleotide sequence ID" value="NZ_STEB01000005.1"/>
</dbReference>
<dbReference type="SMR" id="P78061"/>
<dbReference type="BioGRID" id="4260944">
    <property type="interactions" value="22"/>
</dbReference>
<dbReference type="FunCoup" id="P78061">
    <property type="interactions" value="166"/>
</dbReference>
<dbReference type="STRING" id="511145.b1297"/>
<dbReference type="jPOST" id="P78061"/>
<dbReference type="PaxDb" id="511145-b1297"/>
<dbReference type="EnsemblBacteria" id="AAC74379">
    <property type="protein sequence ID" value="AAC74379"/>
    <property type="gene ID" value="b1297"/>
</dbReference>
<dbReference type="GeneID" id="946202"/>
<dbReference type="KEGG" id="ecj:JW5201"/>
<dbReference type="KEGG" id="eco:b1297"/>
<dbReference type="PATRIC" id="fig|511145.12.peg.1352"/>
<dbReference type="EchoBASE" id="EB3667"/>
<dbReference type="eggNOG" id="COG0174">
    <property type="taxonomic scope" value="Bacteria"/>
</dbReference>
<dbReference type="HOGENOM" id="CLU_017290_0_0_6"/>
<dbReference type="InParanoid" id="P78061"/>
<dbReference type="OMA" id="WAWAPVD"/>
<dbReference type="OrthoDB" id="9789509at2"/>
<dbReference type="PhylomeDB" id="P78061"/>
<dbReference type="BioCyc" id="EcoCyc:G6644-MONOMER"/>
<dbReference type="BioCyc" id="MetaCyc:G6644-MONOMER"/>
<dbReference type="UniPathway" id="UPA00188">
    <property type="reaction ID" value="UER00880"/>
</dbReference>
<dbReference type="PRO" id="PR:P78061"/>
<dbReference type="Proteomes" id="UP000000625">
    <property type="component" value="Chromosome"/>
</dbReference>
<dbReference type="GO" id="GO:0005524">
    <property type="term" value="F:ATP binding"/>
    <property type="evidence" value="ECO:0007669"/>
    <property type="project" value="UniProtKB-KW"/>
</dbReference>
<dbReference type="GO" id="GO:0034024">
    <property type="term" value="F:glutamate-putrescine ligase activity"/>
    <property type="evidence" value="ECO:0000314"/>
    <property type="project" value="EcoCyc"/>
</dbReference>
<dbReference type="GO" id="GO:0004356">
    <property type="term" value="F:glutamine synthetase activity"/>
    <property type="evidence" value="ECO:0007669"/>
    <property type="project" value="InterPro"/>
</dbReference>
<dbReference type="GO" id="GO:0006542">
    <property type="term" value="P:glutamine biosynthetic process"/>
    <property type="evidence" value="ECO:0000318"/>
    <property type="project" value="GO_Central"/>
</dbReference>
<dbReference type="GO" id="GO:0006598">
    <property type="term" value="P:polyamine catabolic process"/>
    <property type="evidence" value="ECO:0000318"/>
    <property type="project" value="GO_Central"/>
</dbReference>
<dbReference type="GO" id="GO:0009447">
    <property type="term" value="P:putrescine catabolic process"/>
    <property type="evidence" value="ECO:0000315"/>
    <property type="project" value="EcoCyc"/>
</dbReference>
<dbReference type="FunFam" id="3.10.20.70:FF:000008">
    <property type="entry name" value="Gamma-glutamylputrescine synthetase PuuA"/>
    <property type="match status" value="1"/>
</dbReference>
<dbReference type="FunFam" id="3.30.590.10:FF:000008">
    <property type="entry name" value="Gamma-glutamylputrescine synthetase PuuA"/>
    <property type="match status" value="1"/>
</dbReference>
<dbReference type="Gene3D" id="3.10.20.70">
    <property type="entry name" value="Glutamine synthetase, N-terminal domain"/>
    <property type="match status" value="1"/>
</dbReference>
<dbReference type="Gene3D" id="3.30.590.10">
    <property type="entry name" value="Glutamine synthetase/guanido kinase, catalytic domain"/>
    <property type="match status" value="1"/>
</dbReference>
<dbReference type="InterPro" id="IPR008147">
    <property type="entry name" value="Gln_synt_N"/>
</dbReference>
<dbReference type="InterPro" id="IPR036651">
    <property type="entry name" value="Gln_synt_N_sf"/>
</dbReference>
<dbReference type="InterPro" id="IPR014746">
    <property type="entry name" value="Gln_synth/guanido_kin_cat_dom"/>
</dbReference>
<dbReference type="InterPro" id="IPR008146">
    <property type="entry name" value="Gln_synth_cat_dom"/>
</dbReference>
<dbReference type="InterPro" id="IPR027303">
    <property type="entry name" value="Gln_synth_gly_rich_site"/>
</dbReference>
<dbReference type="PANTHER" id="PTHR43785">
    <property type="entry name" value="GAMMA-GLUTAMYLPUTRESCINE SYNTHETASE"/>
    <property type="match status" value="1"/>
</dbReference>
<dbReference type="PANTHER" id="PTHR43785:SF12">
    <property type="entry name" value="TYPE-1 GLUTAMINE SYNTHETASE 2"/>
    <property type="match status" value="1"/>
</dbReference>
<dbReference type="Pfam" id="PF00120">
    <property type="entry name" value="Gln-synt_C"/>
    <property type="match status" value="1"/>
</dbReference>
<dbReference type="SMART" id="SM01230">
    <property type="entry name" value="Gln-synt_C"/>
    <property type="match status" value="1"/>
</dbReference>
<dbReference type="SUPFAM" id="SSF54368">
    <property type="entry name" value="Glutamine synthetase, N-terminal domain"/>
    <property type="match status" value="1"/>
</dbReference>
<dbReference type="SUPFAM" id="SSF55931">
    <property type="entry name" value="Glutamine synthetase/guanido kinase"/>
    <property type="match status" value="1"/>
</dbReference>
<dbReference type="PROSITE" id="PS00181">
    <property type="entry name" value="GLNA_ATP"/>
    <property type="match status" value="1"/>
</dbReference>
<dbReference type="PROSITE" id="PS51986">
    <property type="entry name" value="GS_BETA_GRASP"/>
    <property type="match status" value="1"/>
</dbReference>
<dbReference type="PROSITE" id="PS51987">
    <property type="entry name" value="GS_CATALYTIC"/>
    <property type="match status" value="1"/>
</dbReference>
<organism>
    <name type="scientific">Escherichia coli (strain K12)</name>
    <dbReference type="NCBI Taxonomy" id="83333"/>
    <lineage>
        <taxon>Bacteria</taxon>
        <taxon>Pseudomonadati</taxon>
        <taxon>Pseudomonadota</taxon>
        <taxon>Gammaproteobacteria</taxon>
        <taxon>Enterobacterales</taxon>
        <taxon>Enterobacteriaceae</taxon>
        <taxon>Escherichia</taxon>
    </lineage>
</organism>
<keyword id="KW-0067">ATP-binding</keyword>
<keyword id="KW-0436">Ligase</keyword>
<keyword id="KW-0460">Magnesium</keyword>
<keyword id="KW-0464">Manganese</keyword>
<keyword id="KW-0547">Nucleotide-binding</keyword>
<keyword id="KW-1185">Reference proteome</keyword>